<sequence length="349" mass="38512">MRVADFHFELPESLIARHPLAERRASRLLVLDGVTGDLQHRRFADLLDHLRPGDLMVFNNTRVIPARLFGWKASGGKLEILVERVLDDERVLAHVRASKSPKAGSRILIEGGGEAQMLARHDALFELRFDQRVLPLLERVGHMPLPPYIDRPDEAADRERYQTVYAARAGAVAAPTAGLHFDEALLAAIGEKDVATAFVTLHVGAGTFQPVRVERIEDHHMHREWLEVGQEVVDAVAACRARGGRVVAVGTTSVRSLESAARDGVLRPFSGDTDIFIYPGRPFHVVDALVTNFHLPESTLLMLVSAFAGYPETMAAYAAAVAQGYRFFSYGDAMFITRNPAPRAPEETP</sequence>
<dbReference type="EC" id="2.4.99.17" evidence="1"/>
<dbReference type="EMBL" id="CP001157">
    <property type="protein sequence ID" value="ACO80185.1"/>
    <property type="molecule type" value="Genomic_DNA"/>
</dbReference>
<dbReference type="RefSeq" id="WP_012702560.1">
    <property type="nucleotide sequence ID" value="NC_012560.1"/>
</dbReference>
<dbReference type="SMR" id="C1DE77"/>
<dbReference type="STRING" id="322710.Avin_40490"/>
<dbReference type="EnsemblBacteria" id="ACO80185">
    <property type="protein sequence ID" value="ACO80185"/>
    <property type="gene ID" value="Avin_40490"/>
</dbReference>
<dbReference type="GeneID" id="88186992"/>
<dbReference type="KEGG" id="avn:Avin_40490"/>
<dbReference type="eggNOG" id="COG0809">
    <property type="taxonomic scope" value="Bacteria"/>
</dbReference>
<dbReference type="HOGENOM" id="CLU_039110_1_0_6"/>
<dbReference type="OrthoDB" id="9805933at2"/>
<dbReference type="UniPathway" id="UPA00392"/>
<dbReference type="Proteomes" id="UP000002424">
    <property type="component" value="Chromosome"/>
</dbReference>
<dbReference type="GO" id="GO:0005737">
    <property type="term" value="C:cytoplasm"/>
    <property type="evidence" value="ECO:0007669"/>
    <property type="project" value="UniProtKB-SubCell"/>
</dbReference>
<dbReference type="GO" id="GO:0051075">
    <property type="term" value="F:S-adenosylmethionine:tRNA ribosyltransferase-isomerase activity"/>
    <property type="evidence" value="ECO:0007669"/>
    <property type="project" value="UniProtKB-EC"/>
</dbReference>
<dbReference type="GO" id="GO:0008616">
    <property type="term" value="P:queuosine biosynthetic process"/>
    <property type="evidence" value="ECO:0007669"/>
    <property type="project" value="UniProtKB-UniRule"/>
</dbReference>
<dbReference type="GO" id="GO:0002099">
    <property type="term" value="P:tRNA wobble guanine modification"/>
    <property type="evidence" value="ECO:0007669"/>
    <property type="project" value="TreeGrafter"/>
</dbReference>
<dbReference type="FunFam" id="2.40.10.240:FF:000001">
    <property type="entry name" value="S-adenosylmethionine:tRNA ribosyltransferase-isomerase"/>
    <property type="match status" value="1"/>
</dbReference>
<dbReference type="FunFam" id="3.40.1780.10:FF:000001">
    <property type="entry name" value="S-adenosylmethionine:tRNA ribosyltransferase-isomerase"/>
    <property type="match status" value="1"/>
</dbReference>
<dbReference type="Gene3D" id="2.40.10.240">
    <property type="entry name" value="QueA-like"/>
    <property type="match status" value="1"/>
</dbReference>
<dbReference type="Gene3D" id="3.40.1780.10">
    <property type="entry name" value="QueA-like"/>
    <property type="match status" value="1"/>
</dbReference>
<dbReference type="HAMAP" id="MF_00113">
    <property type="entry name" value="QueA"/>
    <property type="match status" value="1"/>
</dbReference>
<dbReference type="InterPro" id="IPR003699">
    <property type="entry name" value="QueA"/>
</dbReference>
<dbReference type="InterPro" id="IPR042118">
    <property type="entry name" value="QueA_dom1"/>
</dbReference>
<dbReference type="InterPro" id="IPR042119">
    <property type="entry name" value="QueA_dom2"/>
</dbReference>
<dbReference type="InterPro" id="IPR036100">
    <property type="entry name" value="QueA_sf"/>
</dbReference>
<dbReference type="NCBIfam" id="NF001140">
    <property type="entry name" value="PRK00147.1"/>
    <property type="match status" value="1"/>
</dbReference>
<dbReference type="NCBIfam" id="TIGR00113">
    <property type="entry name" value="queA"/>
    <property type="match status" value="1"/>
</dbReference>
<dbReference type="PANTHER" id="PTHR30307">
    <property type="entry name" value="S-ADENOSYLMETHIONINE:TRNA RIBOSYLTRANSFERASE-ISOMERASE"/>
    <property type="match status" value="1"/>
</dbReference>
<dbReference type="PANTHER" id="PTHR30307:SF0">
    <property type="entry name" value="S-ADENOSYLMETHIONINE:TRNA RIBOSYLTRANSFERASE-ISOMERASE"/>
    <property type="match status" value="1"/>
</dbReference>
<dbReference type="Pfam" id="PF02547">
    <property type="entry name" value="Queuosine_synth"/>
    <property type="match status" value="1"/>
</dbReference>
<dbReference type="SUPFAM" id="SSF111337">
    <property type="entry name" value="QueA-like"/>
    <property type="match status" value="1"/>
</dbReference>
<comment type="function">
    <text evidence="1">Transfers and isomerizes the ribose moiety from AdoMet to the 7-aminomethyl group of 7-deazaguanine (preQ1-tRNA) to give epoxyqueuosine (oQ-tRNA).</text>
</comment>
<comment type="catalytic activity">
    <reaction evidence="1">
        <text>7-aminomethyl-7-carbaguanosine(34) in tRNA + S-adenosyl-L-methionine = epoxyqueuosine(34) in tRNA + adenine + L-methionine + 2 H(+)</text>
        <dbReference type="Rhea" id="RHEA:32155"/>
        <dbReference type="Rhea" id="RHEA-COMP:10342"/>
        <dbReference type="Rhea" id="RHEA-COMP:18582"/>
        <dbReference type="ChEBI" id="CHEBI:15378"/>
        <dbReference type="ChEBI" id="CHEBI:16708"/>
        <dbReference type="ChEBI" id="CHEBI:57844"/>
        <dbReference type="ChEBI" id="CHEBI:59789"/>
        <dbReference type="ChEBI" id="CHEBI:82833"/>
        <dbReference type="ChEBI" id="CHEBI:194443"/>
        <dbReference type="EC" id="2.4.99.17"/>
    </reaction>
</comment>
<comment type="pathway">
    <text evidence="1">tRNA modification; tRNA-queuosine biosynthesis.</text>
</comment>
<comment type="subunit">
    <text evidence="1">Monomer.</text>
</comment>
<comment type="subcellular location">
    <subcellularLocation>
        <location evidence="1">Cytoplasm</location>
    </subcellularLocation>
</comment>
<comment type="similarity">
    <text evidence="1">Belongs to the QueA family.</text>
</comment>
<proteinExistence type="inferred from homology"/>
<reference key="1">
    <citation type="journal article" date="2009" name="J. Bacteriol.">
        <title>Genome sequence of Azotobacter vinelandii, an obligate aerobe specialized to support diverse anaerobic metabolic processes.</title>
        <authorList>
            <person name="Setubal J.C."/>
            <person name="Dos Santos P."/>
            <person name="Goldman B.S."/>
            <person name="Ertesvaag H."/>
            <person name="Espin G."/>
            <person name="Rubio L.M."/>
            <person name="Valla S."/>
            <person name="Almeida N.F."/>
            <person name="Balasubramanian D."/>
            <person name="Cromes L."/>
            <person name="Curatti L."/>
            <person name="Du Z."/>
            <person name="Godsy E."/>
            <person name="Goodner B."/>
            <person name="Hellner-Burris K."/>
            <person name="Hernandez J.A."/>
            <person name="Houmiel K."/>
            <person name="Imperial J."/>
            <person name="Kennedy C."/>
            <person name="Larson T.J."/>
            <person name="Latreille P."/>
            <person name="Ligon L.S."/>
            <person name="Lu J."/>
            <person name="Maerk M."/>
            <person name="Miller N.M."/>
            <person name="Norton S."/>
            <person name="O'Carroll I.P."/>
            <person name="Paulsen I."/>
            <person name="Raulfs E.C."/>
            <person name="Roemer R."/>
            <person name="Rosser J."/>
            <person name="Segura D."/>
            <person name="Slater S."/>
            <person name="Stricklin S.L."/>
            <person name="Studholme D.J."/>
            <person name="Sun J."/>
            <person name="Viana C.J."/>
            <person name="Wallin E."/>
            <person name="Wang B."/>
            <person name="Wheeler C."/>
            <person name="Zhu H."/>
            <person name="Dean D.R."/>
            <person name="Dixon R."/>
            <person name="Wood D."/>
        </authorList>
    </citation>
    <scope>NUCLEOTIDE SEQUENCE [LARGE SCALE GENOMIC DNA]</scope>
    <source>
        <strain>DJ / ATCC BAA-1303</strain>
    </source>
</reference>
<protein>
    <recommendedName>
        <fullName evidence="1">S-adenosylmethionine:tRNA ribosyltransferase-isomerase</fullName>
        <ecNumber evidence="1">2.4.99.17</ecNumber>
    </recommendedName>
    <alternativeName>
        <fullName evidence="1">Queuosine biosynthesis protein QueA</fullName>
    </alternativeName>
</protein>
<gene>
    <name evidence="1" type="primary">queA</name>
    <name type="ordered locus">Avin_40490</name>
</gene>
<organism>
    <name type="scientific">Azotobacter vinelandii (strain DJ / ATCC BAA-1303)</name>
    <dbReference type="NCBI Taxonomy" id="322710"/>
    <lineage>
        <taxon>Bacteria</taxon>
        <taxon>Pseudomonadati</taxon>
        <taxon>Pseudomonadota</taxon>
        <taxon>Gammaproteobacteria</taxon>
        <taxon>Pseudomonadales</taxon>
        <taxon>Pseudomonadaceae</taxon>
        <taxon>Azotobacter</taxon>
    </lineage>
</organism>
<accession>C1DE77</accession>
<feature type="chain" id="PRO_1000202949" description="S-adenosylmethionine:tRNA ribosyltransferase-isomerase">
    <location>
        <begin position="1"/>
        <end position="349"/>
    </location>
</feature>
<evidence type="ECO:0000255" key="1">
    <source>
        <dbReference type="HAMAP-Rule" id="MF_00113"/>
    </source>
</evidence>
<name>QUEA_AZOVD</name>
<keyword id="KW-0963">Cytoplasm</keyword>
<keyword id="KW-0671">Queuosine biosynthesis</keyword>
<keyword id="KW-0949">S-adenosyl-L-methionine</keyword>
<keyword id="KW-0808">Transferase</keyword>